<accession>Q5JFL6</accession>
<name>HMGCS_THEKO</name>
<evidence type="ECO:0000255" key="1">
    <source>
        <dbReference type="HAMAP-Rule" id="MF_01409"/>
    </source>
</evidence>
<proteinExistence type="inferred from homology"/>
<sequence>MSKLLKPKREVGIIGYGAYVPMYRIKAEEIGRVWGVSSFPIQEKSVPGLDEDTITIGIEAARNALKRAQIDPKLIRAIWLGTESKPYAVKPSGTVIAEAIGATPDLDAADFEFACKAGTEAIQAAIGFVGSGMADYAMAIGADTSQGRPGDHLEFTAAAGGAAYILAPKSSETLAYFEASYSYVTDTPDFWRRQHEHYPRHGNRFTGEPAYFHQIINAAKTLMEELGYTPNDFDYAVFHQPNVKFPLTAAKILGFPKEKVLPGLLSGIIGNTYSGATLVGVSAVLDIAKPGDRILWVSFGSGAGSDAFSLVVQDAIEEKRDLAPKTMDYVNRKKYIDYALYAKHRGKYIL</sequence>
<dbReference type="EC" id="2.3.3.10" evidence="1"/>
<dbReference type="EMBL" id="AP006878">
    <property type="protein sequence ID" value="BAD84370.1"/>
    <property type="molecule type" value="Genomic_DNA"/>
</dbReference>
<dbReference type="RefSeq" id="WP_011249136.1">
    <property type="nucleotide sequence ID" value="NC_006624.1"/>
</dbReference>
<dbReference type="SMR" id="Q5JFL6"/>
<dbReference type="FunCoup" id="Q5JFL6">
    <property type="interactions" value="62"/>
</dbReference>
<dbReference type="STRING" id="69014.TK0181"/>
<dbReference type="EnsemblBacteria" id="BAD84370">
    <property type="protein sequence ID" value="BAD84370"/>
    <property type="gene ID" value="TK0181"/>
</dbReference>
<dbReference type="GeneID" id="78446685"/>
<dbReference type="KEGG" id="tko:TK0181"/>
<dbReference type="PATRIC" id="fig|69014.16.peg.181"/>
<dbReference type="eggNOG" id="arCOG01767">
    <property type="taxonomic scope" value="Archaea"/>
</dbReference>
<dbReference type="HOGENOM" id="CLU_039592_7_0_2"/>
<dbReference type="InParanoid" id="Q5JFL6"/>
<dbReference type="OrthoDB" id="5812at2157"/>
<dbReference type="PhylomeDB" id="Q5JFL6"/>
<dbReference type="UniPathway" id="UPA00058">
    <property type="reaction ID" value="UER00102"/>
</dbReference>
<dbReference type="Proteomes" id="UP000000536">
    <property type="component" value="Chromosome"/>
</dbReference>
<dbReference type="GO" id="GO:0003985">
    <property type="term" value="F:acetyl-CoA C-acetyltransferase activity"/>
    <property type="evidence" value="ECO:0007669"/>
    <property type="project" value="UniProtKB-UniRule"/>
</dbReference>
<dbReference type="GO" id="GO:0004421">
    <property type="term" value="F:hydroxymethylglutaryl-CoA synthase activity"/>
    <property type="evidence" value="ECO:0000318"/>
    <property type="project" value="GO_Central"/>
</dbReference>
<dbReference type="GO" id="GO:0006084">
    <property type="term" value="P:acetyl-CoA metabolic process"/>
    <property type="evidence" value="ECO:0000318"/>
    <property type="project" value="GO_Central"/>
</dbReference>
<dbReference type="GO" id="GO:0010142">
    <property type="term" value="P:farnesyl diphosphate biosynthetic process, mevalonate pathway"/>
    <property type="evidence" value="ECO:0000318"/>
    <property type="project" value="GO_Central"/>
</dbReference>
<dbReference type="GO" id="GO:0019287">
    <property type="term" value="P:isopentenyl diphosphate biosynthetic process, mevalonate pathway"/>
    <property type="evidence" value="ECO:0007669"/>
    <property type="project" value="UniProtKB-UniRule"/>
</dbReference>
<dbReference type="CDD" id="cd00827">
    <property type="entry name" value="init_cond_enzymes"/>
    <property type="match status" value="1"/>
</dbReference>
<dbReference type="FunFam" id="3.40.47.10:FF:000046">
    <property type="entry name" value="UPF0219 protein M1627_1703"/>
    <property type="match status" value="1"/>
</dbReference>
<dbReference type="Gene3D" id="3.40.47.10">
    <property type="match status" value="1"/>
</dbReference>
<dbReference type="HAMAP" id="MF_01409">
    <property type="entry name" value="HMG_CoA_synth_arch"/>
    <property type="match status" value="1"/>
</dbReference>
<dbReference type="InterPro" id="IPR013747">
    <property type="entry name" value="ACP_syn_III_C"/>
</dbReference>
<dbReference type="InterPro" id="IPR004656">
    <property type="entry name" value="HMG_CoA_Synthase"/>
</dbReference>
<dbReference type="InterPro" id="IPR016039">
    <property type="entry name" value="Thiolase-like"/>
</dbReference>
<dbReference type="NCBIfam" id="TIGR00748">
    <property type="entry name" value="HMG_CoA_syn_Arc"/>
    <property type="match status" value="1"/>
</dbReference>
<dbReference type="NCBIfam" id="NF003274">
    <property type="entry name" value="PRK04262.1"/>
    <property type="match status" value="1"/>
</dbReference>
<dbReference type="PANTHER" id="PTHR43323">
    <property type="entry name" value="3-HYDROXY-3-METHYLGLUTARYL COENZYME A SYNTHASE"/>
    <property type="match status" value="1"/>
</dbReference>
<dbReference type="PANTHER" id="PTHR43323:SF2">
    <property type="entry name" value="HYDROXYMETHYLGLUTARYL-COA SYNTHASE"/>
    <property type="match status" value="1"/>
</dbReference>
<dbReference type="Pfam" id="PF08541">
    <property type="entry name" value="ACP_syn_III_C"/>
    <property type="match status" value="1"/>
</dbReference>
<dbReference type="SUPFAM" id="SSF53901">
    <property type="entry name" value="Thiolase-like"/>
    <property type="match status" value="2"/>
</dbReference>
<gene>
    <name type="ordered locus">TK0181</name>
</gene>
<reference key="1">
    <citation type="journal article" date="2005" name="Genome Res.">
        <title>Complete genome sequence of the hyperthermophilic archaeon Thermococcus kodakaraensis KOD1 and comparison with Pyrococcus genomes.</title>
        <authorList>
            <person name="Fukui T."/>
            <person name="Atomi H."/>
            <person name="Kanai T."/>
            <person name="Matsumi R."/>
            <person name="Fujiwara S."/>
            <person name="Imanaka T."/>
        </authorList>
    </citation>
    <scope>NUCLEOTIDE SEQUENCE [LARGE SCALE GENOMIC DNA]</scope>
    <source>
        <strain>ATCC BAA-918 / JCM 12380 / KOD1</strain>
    </source>
</reference>
<organism>
    <name type="scientific">Thermococcus kodakarensis (strain ATCC BAA-918 / JCM 12380 / KOD1)</name>
    <name type="common">Pyrococcus kodakaraensis (strain KOD1)</name>
    <dbReference type="NCBI Taxonomy" id="69014"/>
    <lineage>
        <taxon>Archaea</taxon>
        <taxon>Methanobacteriati</taxon>
        <taxon>Methanobacteriota</taxon>
        <taxon>Thermococci</taxon>
        <taxon>Thermococcales</taxon>
        <taxon>Thermococcaceae</taxon>
        <taxon>Thermococcus</taxon>
    </lineage>
</organism>
<keyword id="KW-0012">Acyltransferase</keyword>
<keyword id="KW-0414">Isoprene biosynthesis</keyword>
<keyword id="KW-1185">Reference proteome</keyword>
<keyword id="KW-0808">Transferase</keyword>
<feature type="chain" id="PRO_0000057624" description="Hydroxymethylglutaryl-CoA synthase">
    <location>
        <begin position="1"/>
        <end position="350"/>
    </location>
</feature>
<feature type="active site" description="Proton donor/acceptor" evidence="1">
    <location>
        <position position="83"/>
    </location>
</feature>
<feature type="active site" description="Acyl-thioester intermediate" evidence="1">
    <location>
        <position position="115"/>
    </location>
</feature>
<feature type="active site" description="Proton donor/acceptor" evidence="1">
    <location>
        <position position="239"/>
    </location>
</feature>
<feature type="binding site" evidence="1">
    <location>
        <position position="115"/>
    </location>
    <ligand>
        <name>(3S)-3-hydroxy-3-methylglutaryl-CoA</name>
        <dbReference type="ChEBI" id="CHEBI:43074"/>
    </ligand>
</feature>
<feature type="binding site" evidence="1">
    <location>
        <position position="156"/>
    </location>
    <ligand>
        <name>(3S)-3-hydroxy-3-methylglutaryl-CoA</name>
        <dbReference type="ChEBI" id="CHEBI:43074"/>
    </ligand>
</feature>
<feature type="binding site" evidence="1">
    <location>
        <position position="204"/>
    </location>
    <ligand>
        <name>CoA</name>
        <dbReference type="ChEBI" id="CHEBI:57287"/>
        <note>ligand shared with acetoacetyl-CoA thiolase</note>
    </ligand>
</feature>
<feature type="binding site" evidence="1">
    <location>
        <position position="206"/>
    </location>
    <ligand>
        <name>(3S)-3-hydroxy-3-methylglutaryl-CoA</name>
        <dbReference type="ChEBI" id="CHEBI:43074"/>
    </ligand>
</feature>
<feature type="binding site" evidence="1">
    <location>
        <position position="239"/>
    </location>
    <ligand>
        <name>(3S)-3-hydroxy-3-methylglutaryl-CoA</name>
        <dbReference type="ChEBI" id="CHEBI:43074"/>
    </ligand>
</feature>
<feature type="binding site" evidence="1">
    <location>
        <position position="244"/>
    </location>
    <ligand>
        <name>CoA</name>
        <dbReference type="ChEBI" id="CHEBI:57287"/>
        <note>ligand shared with acetoacetyl-CoA thiolase</note>
    </ligand>
</feature>
<feature type="binding site" evidence="1">
    <location>
        <position position="271"/>
    </location>
    <ligand>
        <name>(3S)-3-hydroxy-3-methylglutaryl-CoA</name>
        <dbReference type="ChEBI" id="CHEBI:43074"/>
    </ligand>
</feature>
<feature type="binding site" evidence="1">
    <location>
        <position position="301"/>
    </location>
    <ligand>
        <name>(3S)-3-hydroxy-3-methylglutaryl-CoA</name>
        <dbReference type="ChEBI" id="CHEBI:43074"/>
    </ligand>
</feature>
<protein>
    <recommendedName>
        <fullName evidence="1">Hydroxymethylglutaryl-CoA synthase</fullName>
        <shortName evidence="1">HMG-CoA synthase</shortName>
        <shortName evidence="1">HMGCS</shortName>
        <ecNumber evidence="1">2.3.3.10</ecNumber>
    </recommendedName>
</protein>
<comment type="function">
    <text evidence="1">Catalyzes the condensation of acetyl-CoA with acetoacetyl-CoA to form 3-hydroxy-3-methylglutaryl-CoA (HMG-CoA). Functions in the mevalonate (MVA) pathway leading to isopentenyl diphosphate (IPP), a key precursor for the biosynthesis of isoprenoid compounds that are building blocks of archaeal membrane lipids.</text>
</comment>
<comment type="catalytic activity">
    <reaction evidence="1">
        <text>acetoacetyl-CoA + acetyl-CoA + H2O = (3S)-3-hydroxy-3-methylglutaryl-CoA + CoA + H(+)</text>
        <dbReference type="Rhea" id="RHEA:10188"/>
        <dbReference type="ChEBI" id="CHEBI:15377"/>
        <dbReference type="ChEBI" id="CHEBI:15378"/>
        <dbReference type="ChEBI" id="CHEBI:43074"/>
        <dbReference type="ChEBI" id="CHEBI:57286"/>
        <dbReference type="ChEBI" id="CHEBI:57287"/>
        <dbReference type="ChEBI" id="CHEBI:57288"/>
        <dbReference type="EC" id="2.3.3.10"/>
    </reaction>
    <physiologicalReaction direction="left-to-right" evidence="1">
        <dbReference type="Rhea" id="RHEA:10189"/>
    </physiologicalReaction>
</comment>
<comment type="pathway">
    <text evidence="1">Metabolic intermediate biosynthesis; (R)-mevalonate biosynthesis; (R)-mevalonate from acetyl-CoA: step 2/3.</text>
</comment>
<comment type="subunit">
    <text evidence="1">Interacts with acetoacetyl-CoA thiolase that catalyzes the precedent step in the pathway and with a DUF35 protein. The acetoacetyl-CoA thiolase/HMG-CoA synthase complex channels the intermediate via a fused CoA-binding site, which allows for efficient coupling of the endergonic thiolase reaction with the exergonic HMGCS reaction.</text>
</comment>
<comment type="similarity">
    <text evidence="1">Belongs to the thiolase-like superfamily. Archaeal HMG-CoA synthase family.</text>
</comment>